<proteinExistence type="inferred from homology"/>
<gene>
    <name evidence="1" type="primary">rplT</name>
    <name type="ordered locus">TM1040_2513</name>
</gene>
<reference key="1">
    <citation type="submission" date="2006-05" db="EMBL/GenBank/DDBJ databases">
        <title>Complete sequence of chromosome of Silicibacter sp. TM1040.</title>
        <authorList>
            <consortium name="US DOE Joint Genome Institute"/>
            <person name="Copeland A."/>
            <person name="Lucas S."/>
            <person name="Lapidus A."/>
            <person name="Barry K."/>
            <person name="Detter J.C."/>
            <person name="Glavina del Rio T."/>
            <person name="Hammon N."/>
            <person name="Israni S."/>
            <person name="Dalin E."/>
            <person name="Tice H."/>
            <person name="Pitluck S."/>
            <person name="Brettin T."/>
            <person name="Bruce D."/>
            <person name="Han C."/>
            <person name="Tapia R."/>
            <person name="Goodwin L."/>
            <person name="Thompson L.S."/>
            <person name="Gilna P."/>
            <person name="Schmutz J."/>
            <person name="Larimer F."/>
            <person name="Land M."/>
            <person name="Hauser L."/>
            <person name="Kyrpides N."/>
            <person name="Kim E."/>
            <person name="Belas R."/>
            <person name="Moran M.A."/>
            <person name="Buchan A."/>
            <person name="Gonzalez J.M."/>
            <person name="Schell M.A."/>
            <person name="Sun F."/>
            <person name="Richardson P."/>
        </authorList>
    </citation>
    <scope>NUCLEOTIDE SEQUENCE [LARGE SCALE GENOMIC DNA]</scope>
    <source>
        <strain>TM1040</strain>
    </source>
</reference>
<name>RL20_RUEST</name>
<organism>
    <name type="scientific">Ruegeria sp. (strain TM1040)</name>
    <name type="common">Silicibacter sp.</name>
    <dbReference type="NCBI Taxonomy" id="292414"/>
    <lineage>
        <taxon>Bacteria</taxon>
        <taxon>Pseudomonadati</taxon>
        <taxon>Pseudomonadota</taxon>
        <taxon>Alphaproteobacteria</taxon>
        <taxon>Rhodobacterales</taxon>
        <taxon>Roseobacteraceae</taxon>
        <taxon>Ruegeria</taxon>
    </lineage>
</organism>
<evidence type="ECO:0000255" key="1">
    <source>
        <dbReference type="HAMAP-Rule" id="MF_00382"/>
    </source>
</evidence>
<evidence type="ECO:0000305" key="2"/>
<protein>
    <recommendedName>
        <fullName evidence="1">Large ribosomal subunit protein bL20</fullName>
    </recommendedName>
    <alternativeName>
        <fullName evidence="2">50S ribosomal protein L20</fullName>
    </alternativeName>
</protein>
<dbReference type="EMBL" id="CP000377">
    <property type="protein sequence ID" value="ABF65245.1"/>
    <property type="molecule type" value="Genomic_DNA"/>
</dbReference>
<dbReference type="RefSeq" id="WP_011539832.1">
    <property type="nucleotide sequence ID" value="NC_008044.1"/>
</dbReference>
<dbReference type="SMR" id="Q1GDM1"/>
<dbReference type="STRING" id="292414.TM1040_2513"/>
<dbReference type="KEGG" id="sit:TM1040_2513"/>
<dbReference type="eggNOG" id="COG0292">
    <property type="taxonomic scope" value="Bacteria"/>
</dbReference>
<dbReference type="HOGENOM" id="CLU_123265_0_1_5"/>
<dbReference type="OrthoDB" id="9808966at2"/>
<dbReference type="Proteomes" id="UP000000636">
    <property type="component" value="Chromosome"/>
</dbReference>
<dbReference type="GO" id="GO:1990904">
    <property type="term" value="C:ribonucleoprotein complex"/>
    <property type="evidence" value="ECO:0007669"/>
    <property type="project" value="UniProtKB-KW"/>
</dbReference>
<dbReference type="GO" id="GO:0005840">
    <property type="term" value="C:ribosome"/>
    <property type="evidence" value="ECO:0007669"/>
    <property type="project" value="UniProtKB-KW"/>
</dbReference>
<dbReference type="GO" id="GO:0019843">
    <property type="term" value="F:rRNA binding"/>
    <property type="evidence" value="ECO:0007669"/>
    <property type="project" value="UniProtKB-UniRule"/>
</dbReference>
<dbReference type="GO" id="GO:0003735">
    <property type="term" value="F:structural constituent of ribosome"/>
    <property type="evidence" value="ECO:0007669"/>
    <property type="project" value="InterPro"/>
</dbReference>
<dbReference type="GO" id="GO:0000027">
    <property type="term" value="P:ribosomal large subunit assembly"/>
    <property type="evidence" value="ECO:0007669"/>
    <property type="project" value="UniProtKB-UniRule"/>
</dbReference>
<dbReference type="GO" id="GO:0006412">
    <property type="term" value="P:translation"/>
    <property type="evidence" value="ECO:0007669"/>
    <property type="project" value="InterPro"/>
</dbReference>
<dbReference type="CDD" id="cd07026">
    <property type="entry name" value="Ribosomal_L20"/>
    <property type="match status" value="1"/>
</dbReference>
<dbReference type="FunFam" id="1.10.1900.20:FF:000001">
    <property type="entry name" value="50S ribosomal protein L20"/>
    <property type="match status" value="1"/>
</dbReference>
<dbReference type="Gene3D" id="6.10.160.10">
    <property type="match status" value="1"/>
</dbReference>
<dbReference type="Gene3D" id="1.10.1900.20">
    <property type="entry name" value="Ribosomal protein L20"/>
    <property type="match status" value="1"/>
</dbReference>
<dbReference type="HAMAP" id="MF_00382">
    <property type="entry name" value="Ribosomal_bL20"/>
    <property type="match status" value="1"/>
</dbReference>
<dbReference type="InterPro" id="IPR005813">
    <property type="entry name" value="Ribosomal_bL20"/>
</dbReference>
<dbReference type="InterPro" id="IPR049946">
    <property type="entry name" value="RIBOSOMAL_L20_CS"/>
</dbReference>
<dbReference type="InterPro" id="IPR035566">
    <property type="entry name" value="Ribosomal_protein_bL20_C"/>
</dbReference>
<dbReference type="NCBIfam" id="TIGR01032">
    <property type="entry name" value="rplT_bact"/>
    <property type="match status" value="1"/>
</dbReference>
<dbReference type="PANTHER" id="PTHR10986">
    <property type="entry name" value="39S RIBOSOMAL PROTEIN L20"/>
    <property type="match status" value="1"/>
</dbReference>
<dbReference type="Pfam" id="PF00453">
    <property type="entry name" value="Ribosomal_L20"/>
    <property type="match status" value="1"/>
</dbReference>
<dbReference type="PRINTS" id="PR00062">
    <property type="entry name" value="RIBOSOMALL20"/>
</dbReference>
<dbReference type="SUPFAM" id="SSF74731">
    <property type="entry name" value="Ribosomal protein L20"/>
    <property type="match status" value="1"/>
</dbReference>
<dbReference type="PROSITE" id="PS00937">
    <property type="entry name" value="RIBOSOMAL_L20"/>
    <property type="match status" value="1"/>
</dbReference>
<keyword id="KW-1185">Reference proteome</keyword>
<keyword id="KW-0687">Ribonucleoprotein</keyword>
<keyword id="KW-0689">Ribosomal protein</keyword>
<keyword id="KW-0694">RNA-binding</keyword>
<keyword id="KW-0699">rRNA-binding</keyword>
<comment type="function">
    <text evidence="1">Binds directly to 23S ribosomal RNA and is necessary for the in vitro assembly process of the 50S ribosomal subunit. It is not involved in the protein synthesizing functions of that subunit.</text>
</comment>
<comment type="similarity">
    <text evidence="1">Belongs to the bacterial ribosomal protein bL20 family.</text>
</comment>
<accession>Q1GDM1</accession>
<sequence length="121" mass="13672">MSRVKGGTVTHARHKKVIKAAKGYYGRRKNTFKVARQAVDKANQYATRDRKNRKRNFRALWIQRINAAVRSHDEALTYSRFINGLNLAGIEVDRKVLADLAVHEPEAFGAIVRQAQDALAA</sequence>
<feature type="chain" id="PRO_1000049075" description="Large ribosomal subunit protein bL20">
    <location>
        <begin position="1"/>
        <end position="121"/>
    </location>
</feature>